<dbReference type="EMBL" id="DS231663">
    <property type="protein sequence ID" value="ESU06274.1"/>
    <property type="molecule type" value="Genomic_DNA"/>
</dbReference>
<dbReference type="EMBL" id="HG970332">
    <property type="protein sequence ID" value="CEF73065.1"/>
    <property type="molecule type" value="Genomic_DNA"/>
</dbReference>
<dbReference type="RefSeq" id="XP_011316759.1">
    <property type="nucleotide sequence ID" value="XM_011318457.1"/>
</dbReference>
<dbReference type="SMR" id="Q4IP51"/>
<dbReference type="FunCoup" id="Q4IP51">
    <property type="interactions" value="449"/>
</dbReference>
<dbReference type="STRING" id="229533.Q4IP51"/>
<dbReference type="GeneID" id="23548465"/>
<dbReference type="KEGG" id="fgr:FGSG_01007"/>
<dbReference type="VEuPathDB" id="FungiDB:FGRAMPH1_01G02527"/>
<dbReference type="eggNOG" id="KOG3303">
    <property type="taxonomic scope" value="Eukaryota"/>
</dbReference>
<dbReference type="HOGENOM" id="CLU_079191_0_0_1"/>
<dbReference type="InParanoid" id="Q4IP51"/>
<dbReference type="OrthoDB" id="58203at110618"/>
<dbReference type="Proteomes" id="UP000070720">
    <property type="component" value="Chromosome 1"/>
</dbReference>
<dbReference type="GO" id="GO:0000811">
    <property type="term" value="C:GINS complex"/>
    <property type="evidence" value="ECO:0007669"/>
    <property type="project" value="InterPro"/>
</dbReference>
<dbReference type="GO" id="GO:1902983">
    <property type="term" value="P:DNA strand elongation involved in mitotic DNA replication"/>
    <property type="evidence" value="ECO:0007669"/>
    <property type="project" value="TreeGrafter"/>
</dbReference>
<dbReference type="CDD" id="cd11710">
    <property type="entry name" value="GINS_A_psf1"/>
    <property type="match status" value="1"/>
</dbReference>
<dbReference type="CDD" id="cd21696">
    <property type="entry name" value="GINS_B_Psf1"/>
    <property type="match status" value="1"/>
</dbReference>
<dbReference type="FunFam" id="1.20.58.1030:FF:000003">
    <property type="entry name" value="DNA replication complex GINS protein PSF1"/>
    <property type="match status" value="1"/>
</dbReference>
<dbReference type="Gene3D" id="1.20.58.1030">
    <property type="match status" value="1"/>
</dbReference>
<dbReference type="InterPro" id="IPR021151">
    <property type="entry name" value="GINS_A"/>
</dbReference>
<dbReference type="InterPro" id="IPR036224">
    <property type="entry name" value="GINS_bundle-like_dom_sf"/>
</dbReference>
<dbReference type="InterPro" id="IPR005339">
    <property type="entry name" value="GINS_Psf1"/>
</dbReference>
<dbReference type="InterPro" id="IPR056783">
    <property type="entry name" value="PSF1_C"/>
</dbReference>
<dbReference type="PANTHER" id="PTHR12914:SF2">
    <property type="entry name" value="DNA REPLICATION COMPLEX GINS PROTEIN PSF1"/>
    <property type="match status" value="1"/>
</dbReference>
<dbReference type="PANTHER" id="PTHR12914">
    <property type="entry name" value="PARTNER OF SLD5"/>
    <property type="match status" value="1"/>
</dbReference>
<dbReference type="Pfam" id="PF24997">
    <property type="entry name" value="PSF1_C"/>
    <property type="match status" value="1"/>
</dbReference>
<dbReference type="Pfam" id="PF05916">
    <property type="entry name" value="Sld5"/>
    <property type="match status" value="1"/>
</dbReference>
<dbReference type="SUPFAM" id="SSF158573">
    <property type="entry name" value="GINS helical bundle-like"/>
    <property type="match status" value="1"/>
</dbReference>
<reference key="1">
    <citation type="journal article" date="2007" name="Science">
        <title>The Fusarium graminearum genome reveals a link between localized polymorphism and pathogen specialization.</title>
        <authorList>
            <person name="Cuomo C.A."/>
            <person name="Gueldener U."/>
            <person name="Xu J.-R."/>
            <person name="Trail F."/>
            <person name="Turgeon B.G."/>
            <person name="Di Pietro A."/>
            <person name="Walton J.D."/>
            <person name="Ma L.-J."/>
            <person name="Baker S.E."/>
            <person name="Rep M."/>
            <person name="Adam G."/>
            <person name="Antoniw J."/>
            <person name="Baldwin T."/>
            <person name="Calvo S.E."/>
            <person name="Chang Y.-L."/>
            <person name="DeCaprio D."/>
            <person name="Gale L.R."/>
            <person name="Gnerre S."/>
            <person name="Goswami R.S."/>
            <person name="Hammond-Kosack K."/>
            <person name="Harris L.J."/>
            <person name="Hilburn K."/>
            <person name="Kennell J.C."/>
            <person name="Kroken S."/>
            <person name="Magnuson J.K."/>
            <person name="Mannhaupt G."/>
            <person name="Mauceli E.W."/>
            <person name="Mewes H.-W."/>
            <person name="Mitterbauer R."/>
            <person name="Muehlbauer G."/>
            <person name="Muensterkoetter M."/>
            <person name="Nelson D."/>
            <person name="O'Donnell K."/>
            <person name="Ouellet T."/>
            <person name="Qi W."/>
            <person name="Quesneville H."/>
            <person name="Roncero M.I.G."/>
            <person name="Seong K.-Y."/>
            <person name="Tetko I.V."/>
            <person name="Urban M."/>
            <person name="Waalwijk C."/>
            <person name="Ward T.J."/>
            <person name="Yao J."/>
            <person name="Birren B.W."/>
            <person name="Kistler H.C."/>
        </authorList>
    </citation>
    <scope>NUCLEOTIDE SEQUENCE [LARGE SCALE GENOMIC DNA]</scope>
    <source>
        <strain>ATCC MYA-4620 / CBS 123657 / FGSC 9075 / NRRL 31084 / PH-1</strain>
    </source>
</reference>
<reference key="2">
    <citation type="journal article" date="2010" name="Nature">
        <title>Comparative genomics reveals mobile pathogenicity chromosomes in Fusarium.</title>
        <authorList>
            <person name="Ma L.-J."/>
            <person name="van der Does H.C."/>
            <person name="Borkovich K.A."/>
            <person name="Coleman J.J."/>
            <person name="Daboussi M.-J."/>
            <person name="Di Pietro A."/>
            <person name="Dufresne M."/>
            <person name="Freitag M."/>
            <person name="Grabherr M."/>
            <person name="Henrissat B."/>
            <person name="Houterman P.M."/>
            <person name="Kang S."/>
            <person name="Shim W.-B."/>
            <person name="Woloshuk C."/>
            <person name="Xie X."/>
            <person name="Xu J.-R."/>
            <person name="Antoniw J."/>
            <person name="Baker S.E."/>
            <person name="Bluhm B.H."/>
            <person name="Breakspear A."/>
            <person name="Brown D.W."/>
            <person name="Butchko R.A.E."/>
            <person name="Chapman S."/>
            <person name="Coulson R."/>
            <person name="Coutinho P.M."/>
            <person name="Danchin E.G.J."/>
            <person name="Diener A."/>
            <person name="Gale L.R."/>
            <person name="Gardiner D.M."/>
            <person name="Goff S."/>
            <person name="Hammond-Kosack K.E."/>
            <person name="Hilburn K."/>
            <person name="Hua-Van A."/>
            <person name="Jonkers W."/>
            <person name="Kazan K."/>
            <person name="Kodira C.D."/>
            <person name="Koehrsen M."/>
            <person name="Kumar L."/>
            <person name="Lee Y.-H."/>
            <person name="Li L."/>
            <person name="Manners J.M."/>
            <person name="Miranda-Saavedra D."/>
            <person name="Mukherjee M."/>
            <person name="Park G."/>
            <person name="Park J."/>
            <person name="Park S.-Y."/>
            <person name="Proctor R.H."/>
            <person name="Regev A."/>
            <person name="Ruiz-Roldan M.C."/>
            <person name="Sain D."/>
            <person name="Sakthikumar S."/>
            <person name="Sykes S."/>
            <person name="Schwartz D.C."/>
            <person name="Turgeon B.G."/>
            <person name="Wapinski I."/>
            <person name="Yoder O."/>
            <person name="Young S."/>
            <person name="Zeng Q."/>
            <person name="Zhou S."/>
            <person name="Galagan J."/>
            <person name="Cuomo C.A."/>
            <person name="Kistler H.C."/>
            <person name="Rep M."/>
        </authorList>
    </citation>
    <scope>GENOME REANNOTATION</scope>
    <source>
        <strain>ATCC MYA-4620 / CBS 123657 / FGSC 9075 / NRRL 31084 / PH-1</strain>
    </source>
</reference>
<reference key="3">
    <citation type="journal article" date="2015" name="BMC Genomics">
        <title>The completed genome sequence of the pathogenic ascomycete fungus Fusarium graminearum.</title>
        <authorList>
            <person name="King R."/>
            <person name="Urban M."/>
            <person name="Hammond-Kosack M.C.U."/>
            <person name="Hassani-Pak K."/>
            <person name="Hammond-Kosack K.E."/>
        </authorList>
    </citation>
    <scope>NUCLEOTIDE SEQUENCE [LARGE SCALE GENOMIC DNA]</scope>
    <source>
        <strain>ATCC MYA-4620 / CBS 123657 / FGSC 9075 / NRRL 31084 / PH-1</strain>
    </source>
</reference>
<gene>
    <name type="primary">PSF1</name>
    <name type="ORF">FGRRES_01007</name>
    <name type="ORF">FGSG_01007</name>
</gene>
<protein>
    <recommendedName>
        <fullName>DNA replication complex GINS protein PSF1</fullName>
    </recommendedName>
</protein>
<keyword id="KW-0235">DNA replication</keyword>
<keyword id="KW-0539">Nucleus</keyword>
<keyword id="KW-1185">Reference proteome</keyword>
<name>PSF1_GIBZE</name>
<evidence type="ECO:0000250" key="1"/>
<evidence type="ECO:0000256" key="2">
    <source>
        <dbReference type="SAM" id="MobiDB-lite"/>
    </source>
</evidence>
<evidence type="ECO:0000305" key="3"/>
<organism>
    <name type="scientific">Gibberella zeae (strain ATCC MYA-4620 / CBS 123657 / FGSC 9075 / NRRL 31084 / PH-1)</name>
    <name type="common">Wheat head blight fungus</name>
    <name type="synonym">Fusarium graminearum</name>
    <dbReference type="NCBI Taxonomy" id="229533"/>
    <lineage>
        <taxon>Eukaryota</taxon>
        <taxon>Fungi</taxon>
        <taxon>Dikarya</taxon>
        <taxon>Ascomycota</taxon>
        <taxon>Pezizomycotina</taxon>
        <taxon>Sordariomycetes</taxon>
        <taxon>Hypocreomycetidae</taxon>
        <taxon>Hypocreales</taxon>
        <taxon>Nectriaceae</taxon>
        <taxon>Fusarium</taxon>
    </lineage>
</organism>
<proteinExistence type="inferred from homology"/>
<feature type="chain" id="PRO_0000278402" description="DNA replication complex GINS protein PSF1">
    <location>
        <begin position="1"/>
        <end position="212"/>
    </location>
</feature>
<feature type="region of interest" description="Disordered" evidence="2">
    <location>
        <begin position="107"/>
        <end position="131"/>
    </location>
</feature>
<feature type="compositionally biased region" description="Low complexity" evidence="2">
    <location>
        <begin position="113"/>
        <end position="128"/>
    </location>
</feature>
<comment type="function">
    <text evidence="1">The GINS complex plays an essential role in the initiation of DNA replication.</text>
</comment>
<comment type="subunit">
    <text evidence="1">Component of the GINS complex which is a heterotetramer of SLD5, PSF1, PSF2 and PSF3.</text>
</comment>
<comment type="subcellular location">
    <subcellularLocation>
        <location evidence="1">Nucleus</location>
    </subcellularLocation>
</comment>
<comment type="similarity">
    <text evidence="3">Belongs to the GINS1/PSF1 family.</text>
</comment>
<accession>Q4IP51</accession>
<accession>A0A0E0RP90</accession>
<accession>V6QWF7</accession>
<sequence length="212" mass="23833">MYGDLGNKLVQHAKRTQNLAHLPPYQTEIVRAVTREVRDLDKDVGELLEPFQGSFDPSADQAVSCTLLVNHLSMRRNKRCLLAYHRTRTDKLEEQVWNGSDVVDLSGQQVRDTSNSGTGSSGATSSLSPQEEEYVRQYSDLLAAYKGQWTDIDLTGSLEPPRDLFIDVRVIKDAGEIQTEYGAITLTKNSQFYVRQGDVERLITQGYLHKLG</sequence>